<feature type="chain" id="PRO_1000123894" description="Probable protein kinase UbiB">
    <location>
        <begin position="1"/>
        <end position="525"/>
    </location>
</feature>
<feature type="transmembrane region" description="Helical" evidence="1">
    <location>
        <begin position="501"/>
        <end position="521"/>
    </location>
</feature>
<feature type="domain" description="Protein kinase" evidence="1">
    <location>
        <begin position="118"/>
        <end position="500"/>
    </location>
</feature>
<feature type="active site" description="Proton acceptor" evidence="1">
    <location>
        <position position="285"/>
    </location>
</feature>
<feature type="binding site" evidence="1">
    <location>
        <begin position="124"/>
        <end position="132"/>
    </location>
    <ligand>
        <name>ATP</name>
        <dbReference type="ChEBI" id="CHEBI:30616"/>
    </ligand>
</feature>
<feature type="binding site" evidence="1">
    <location>
        <position position="150"/>
    </location>
    <ligand>
        <name>ATP</name>
        <dbReference type="ChEBI" id="CHEBI:30616"/>
    </ligand>
</feature>
<accession>A3NRJ7</accession>
<gene>
    <name evidence="1" type="primary">ubiB</name>
    <name type="ordered locus">BURPS1106A_0686</name>
</gene>
<evidence type="ECO:0000255" key="1">
    <source>
        <dbReference type="HAMAP-Rule" id="MF_00414"/>
    </source>
</evidence>
<name>UBIB_BURP0</name>
<comment type="function">
    <text evidence="1">Is probably a protein kinase regulator of UbiI activity which is involved in aerobic coenzyme Q (ubiquinone) biosynthesis.</text>
</comment>
<comment type="pathway">
    <text>Cofactor biosynthesis; ubiquinone biosynthesis [regulation].</text>
</comment>
<comment type="subcellular location">
    <subcellularLocation>
        <location evidence="1">Cell inner membrane</location>
        <topology evidence="1">Single-pass membrane protein</topology>
    </subcellularLocation>
</comment>
<comment type="similarity">
    <text evidence="1">Belongs to the ABC1 family. UbiB subfamily.</text>
</comment>
<reference key="1">
    <citation type="journal article" date="2010" name="Genome Biol. Evol.">
        <title>Continuing evolution of Burkholderia mallei through genome reduction and large-scale rearrangements.</title>
        <authorList>
            <person name="Losada L."/>
            <person name="Ronning C.M."/>
            <person name="DeShazer D."/>
            <person name="Woods D."/>
            <person name="Fedorova N."/>
            <person name="Kim H.S."/>
            <person name="Shabalina S.A."/>
            <person name="Pearson T.R."/>
            <person name="Brinkac L."/>
            <person name="Tan P."/>
            <person name="Nandi T."/>
            <person name="Crabtree J."/>
            <person name="Badger J."/>
            <person name="Beckstrom-Sternberg S."/>
            <person name="Saqib M."/>
            <person name="Schutzer S.E."/>
            <person name="Keim P."/>
            <person name="Nierman W.C."/>
        </authorList>
    </citation>
    <scope>NUCLEOTIDE SEQUENCE [LARGE SCALE GENOMIC DNA]</scope>
    <source>
        <strain>1106a</strain>
    </source>
</reference>
<dbReference type="EC" id="2.7.-.-" evidence="1"/>
<dbReference type="EMBL" id="CP000572">
    <property type="protein sequence ID" value="ABN88722.1"/>
    <property type="molecule type" value="Genomic_DNA"/>
</dbReference>
<dbReference type="RefSeq" id="WP_004189815.1">
    <property type="nucleotide sequence ID" value="NC_009076.1"/>
</dbReference>
<dbReference type="SMR" id="A3NRJ7"/>
<dbReference type="GeneID" id="93059152"/>
<dbReference type="KEGG" id="bpl:BURPS1106A_0686"/>
<dbReference type="HOGENOM" id="CLU_006533_0_0_4"/>
<dbReference type="UniPathway" id="UPA00232"/>
<dbReference type="Proteomes" id="UP000006738">
    <property type="component" value="Chromosome I"/>
</dbReference>
<dbReference type="GO" id="GO:0005886">
    <property type="term" value="C:plasma membrane"/>
    <property type="evidence" value="ECO:0007669"/>
    <property type="project" value="UniProtKB-SubCell"/>
</dbReference>
<dbReference type="GO" id="GO:0005524">
    <property type="term" value="F:ATP binding"/>
    <property type="evidence" value="ECO:0007669"/>
    <property type="project" value="UniProtKB-KW"/>
</dbReference>
<dbReference type="GO" id="GO:0004672">
    <property type="term" value="F:protein kinase activity"/>
    <property type="evidence" value="ECO:0007669"/>
    <property type="project" value="UniProtKB-UniRule"/>
</dbReference>
<dbReference type="GO" id="GO:0010795">
    <property type="term" value="P:regulation of ubiquinone biosynthetic process"/>
    <property type="evidence" value="ECO:0007669"/>
    <property type="project" value="UniProtKB-UniRule"/>
</dbReference>
<dbReference type="GO" id="GO:0006744">
    <property type="term" value="P:ubiquinone biosynthetic process"/>
    <property type="evidence" value="ECO:0007669"/>
    <property type="project" value="UniProtKB-UniPathway"/>
</dbReference>
<dbReference type="CDD" id="cd13972">
    <property type="entry name" value="UbiB"/>
    <property type="match status" value="1"/>
</dbReference>
<dbReference type="HAMAP" id="MF_00414">
    <property type="entry name" value="UbiB"/>
    <property type="match status" value="1"/>
</dbReference>
<dbReference type="InterPro" id="IPR004147">
    <property type="entry name" value="ABC1_dom"/>
</dbReference>
<dbReference type="InterPro" id="IPR011009">
    <property type="entry name" value="Kinase-like_dom_sf"/>
</dbReference>
<dbReference type="InterPro" id="IPR010232">
    <property type="entry name" value="UbiB"/>
</dbReference>
<dbReference type="InterPro" id="IPR045308">
    <property type="entry name" value="UbiB_bact"/>
</dbReference>
<dbReference type="InterPro" id="IPR050154">
    <property type="entry name" value="UbiB_kinase"/>
</dbReference>
<dbReference type="NCBIfam" id="NF003404">
    <property type="entry name" value="PRK04750.1"/>
    <property type="match status" value="1"/>
</dbReference>
<dbReference type="NCBIfam" id="TIGR01982">
    <property type="entry name" value="UbiB"/>
    <property type="match status" value="1"/>
</dbReference>
<dbReference type="PANTHER" id="PTHR10566">
    <property type="entry name" value="CHAPERONE-ACTIVITY OF BC1 COMPLEX CABC1 -RELATED"/>
    <property type="match status" value="1"/>
</dbReference>
<dbReference type="PANTHER" id="PTHR10566:SF113">
    <property type="entry name" value="PROTEIN ACTIVITY OF BC1 COMPLEX KINASE 7, CHLOROPLASTIC"/>
    <property type="match status" value="1"/>
</dbReference>
<dbReference type="Pfam" id="PF03109">
    <property type="entry name" value="ABC1"/>
    <property type="match status" value="1"/>
</dbReference>
<dbReference type="SUPFAM" id="SSF56112">
    <property type="entry name" value="Protein kinase-like (PK-like)"/>
    <property type="match status" value="1"/>
</dbReference>
<proteinExistence type="inferred from homology"/>
<sequence length="525" mass="59775">MRIFRFVKIVFTVIRFGLDEVMLSRIENPRVKLLLRITTIGRRFADPPAVRLRRALESLGPIFVKFGQVLSTRRDLLPVDFANELAKLQDQVPPFDSAVAIAIVEKSLGARIDVLFDEFERVPVASASIAQVHFAKLKQGEHKGKAVAVKVLRPNMLPVIDSDLALMRDIATWAERLWADGRRLKPREVVAEFDKYLHDELDLMREAANGSQLRRNFAGLDLLLVPEMFWDYSTPAVLVMERMTGVPISQVDTLRAAGVDIPKLAREGVEIFFTQVFRDGFFHADMHPGNIQVSLDPKHFGRYIALDFGIVGALSDFDKNYLAQNFLAFFKRDYHRVATLHLESGWVPPDTRVEELESAIRAVCEPYFDRALKDISLGQVLMRLFSTSRRFNVEIQPQLVLLQKTMLNVEGLGRSLDPELDLWKTAKPYLERWMTEQIGLRGWYERFKVEAPQWSKTLPQLPRLVHQALISHHEAPRAISDDLIRQILVEQRRTNRLLQALLVFGLAVGAGAVIARVLIVLAYGG</sequence>
<organism>
    <name type="scientific">Burkholderia pseudomallei (strain 1106a)</name>
    <dbReference type="NCBI Taxonomy" id="357348"/>
    <lineage>
        <taxon>Bacteria</taxon>
        <taxon>Pseudomonadati</taxon>
        <taxon>Pseudomonadota</taxon>
        <taxon>Betaproteobacteria</taxon>
        <taxon>Burkholderiales</taxon>
        <taxon>Burkholderiaceae</taxon>
        <taxon>Burkholderia</taxon>
        <taxon>pseudomallei group</taxon>
    </lineage>
</organism>
<keyword id="KW-0067">ATP-binding</keyword>
<keyword id="KW-0997">Cell inner membrane</keyword>
<keyword id="KW-1003">Cell membrane</keyword>
<keyword id="KW-0418">Kinase</keyword>
<keyword id="KW-0472">Membrane</keyword>
<keyword id="KW-0547">Nucleotide-binding</keyword>
<keyword id="KW-0808">Transferase</keyword>
<keyword id="KW-0812">Transmembrane</keyword>
<keyword id="KW-1133">Transmembrane helix</keyword>
<keyword id="KW-0831">Ubiquinone biosynthesis</keyword>
<protein>
    <recommendedName>
        <fullName evidence="1">Probable protein kinase UbiB</fullName>
        <ecNumber evidence="1">2.7.-.-</ecNumber>
    </recommendedName>
    <alternativeName>
        <fullName evidence="1">Ubiquinone biosynthesis protein UbiB</fullName>
    </alternativeName>
</protein>